<organism>
    <name type="scientific">Streptococcus thermophilus (strain ATCC BAA-491 / LMD-9)</name>
    <dbReference type="NCBI Taxonomy" id="322159"/>
    <lineage>
        <taxon>Bacteria</taxon>
        <taxon>Bacillati</taxon>
        <taxon>Bacillota</taxon>
        <taxon>Bacilli</taxon>
        <taxon>Lactobacillales</taxon>
        <taxon>Streptococcaceae</taxon>
        <taxon>Streptococcus</taxon>
    </lineage>
</organism>
<comment type="function">
    <text evidence="1">Associates with the EF-Tu.GDP complex and induces the exchange of GDP to GTP. It remains bound to the aminoacyl-tRNA.EF-Tu.GTP complex up to the GTP hydrolysis stage on the ribosome.</text>
</comment>
<comment type="subcellular location">
    <subcellularLocation>
        <location evidence="1">Cytoplasm</location>
    </subcellularLocation>
</comment>
<comment type="similarity">
    <text evidence="1">Belongs to the EF-Ts family.</text>
</comment>
<name>EFTS_STRTD</name>
<accession>Q03MW6</accession>
<keyword id="KW-0963">Cytoplasm</keyword>
<keyword id="KW-0251">Elongation factor</keyword>
<keyword id="KW-0648">Protein biosynthesis</keyword>
<gene>
    <name evidence="1" type="primary">tsf</name>
    <name type="ordered locus">STER_0106</name>
</gene>
<reference key="1">
    <citation type="journal article" date="2006" name="Proc. Natl. Acad. Sci. U.S.A.">
        <title>Comparative genomics of the lactic acid bacteria.</title>
        <authorList>
            <person name="Makarova K.S."/>
            <person name="Slesarev A."/>
            <person name="Wolf Y.I."/>
            <person name="Sorokin A."/>
            <person name="Mirkin B."/>
            <person name="Koonin E.V."/>
            <person name="Pavlov A."/>
            <person name="Pavlova N."/>
            <person name="Karamychev V."/>
            <person name="Polouchine N."/>
            <person name="Shakhova V."/>
            <person name="Grigoriev I."/>
            <person name="Lou Y."/>
            <person name="Rohksar D."/>
            <person name="Lucas S."/>
            <person name="Huang K."/>
            <person name="Goodstein D.M."/>
            <person name="Hawkins T."/>
            <person name="Plengvidhya V."/>
            <person name="Welker D."/>
            <person name="Hughes J."/>
            <person name="Goh Y."/>
            <person name="Benson A."/>
            <person name="Baldwin K."/>
            <person name="Lee J.-H."/>
            <person name="Diaz-Muniz I."/>
            <person name="Dosti B."/>
            <person name="Smeianov V."/>
            <person name="Wechter W."/>
            <person name="Barabote R."/>
            <person name="Lorca G."/>
            <person name="Altermann E."/>
            <person name="Barrangou R."/>
            <person name="Ganesan B."/>
            <person name="Xie Y."/>
            <person name="Rawsthorne H."/>
            <person name="Tamir D."/>
            <person name="Parker C."/>
            <person name="Breidt F."/>
            <person name="Broadbent J.R."/>
            <person name="Hutkins R."/>
            <person name="O'Sullivan D."/>
            <person name="Steele J."/>
            <person name="Unlu G."/>
            <person name="Saier M.H. Jr."/>
            <person name="Klaenhammer T."/>
            <person name="Richardson P."/>
            <person name="Kozyavkin S."/>
            <person name="Weimer B.C."/>
            <person name="Mills D.A."/>
        </authorList>
    </citation>
    <scope>NUCLEOTIDE SEQUENCE [LARGE SCALE GENOMIC DNA]</scope>
    <source>
        <strain>ATCC BAA-491 / LMD-9</strain>
    </source>
</reference>
<sequence length="346" mass="37359">MAEITAKLVKELREKSGAGVMDAKKALVEVDGDIEKAIELLREKGMAKAAKKADRIAAEGLTGIYVSGNVAAVVEVNAETDFVAKNAQFVELVNETAKVIAEGKPANNEEALALTMPSGETLEAAYVTATATIGEKISLRRFAVVEKTDAQHFGAYQHNGGRIGVVSVIEGGDEAIAKQISMHIAAMKPTVLSYSELDEQFVKDELAQLNHAIDQDNESRAMVNKPALPHLKYGSKAQLTDEVIAQAEEDIKAELAAEGKPEKIWDKIIPGKMDRFILDNTKVDQAYTLLAQVYIMDDSKTVEAYLESVNASVVEFVRFEVGEGIEKASNDFESEVAATMAAALNN</sequence>
<proteinExistence type="inferred from homology"/>
<protein>
    <recommendedName>
        <fullName evidence="1">Elongation factor Ts</fullName>
        <shortName evidence="1">EF-Ts</shortName>
    </recommendedName>
</protein>
<feature type="chain" id="PRO_1000006195" description="Elongation factor Ts">
    <location>
        <begin position="1"/>
        <end position="346"/>
    </location>
</feature>
<feature type="region of interest" description="Involved in Mg(2+) ion dislocation from EF-Tu" evidence="1">
    <location>
        <begin position="80"/>
        <end position="83"/>
    </location>
</feature>
<dbReference type="EMBL" id="CP000419">
    <property type="protein sequence ID" value="ABJ65456.1"/>
    <property type="molecule type" value="Genomic_DNA"/>
</dbReference>
<dbReference type="RefSeq" id="WP_002949105.1">
    <property type="nucleotide sequence ID" value="NC_008532.1"/>
</dbReference>
<dbReference type="SMR" id="Q03MW6"/>
<dbReference type="GeneID" id="66898005"/>
<dbReference type="KEGG" id="ste:STER_0106"/>
<dbReference type="HOGENOM" id="CLU_047155_0_1_9"/>
<dbReference type="GO" id="GO:0005737">
    <property type="term" value="C:cytoplasm"/>
    <property type="evidence" value="ECO:0007669"/>
    <property type="project" value="UniProtKB-SubCell"/>
</dbReference>
<dbReference type="GO" id="GO:0003746">
    <property type="term" value="F:translation elongation factor activity"/>
    <property type="evidence" value="ECO:0007669"/>
    <property type="project" value="UniProtKB-UniRule"/>
</dbReference>
<dbReference type="CDD" id="cd14275">
    <property type="entry name" value="UBA_EF-Ts"/>
    <property type="match status" value="1"/>
</dbReference>
<dbReference type="FunFam" id="1.10.286.20:FF:000004">
    <property type="entry name" value="Elongation factor Ts"/>
    <property type="match status" value="1"/>
</dbReference>
<dbReference type="FunFam" id="1.10.8.10:FF:000001">
    <property type="entry name" value="Elongation factor Ts"/>
    <property type="match status" value="1"/>
</dbReference>
<dbReference type="FunFam" id="3.30.479.20:FF:000009">
    <property type="entry name" value="Elongation factor Ts"/>
    <property type="match status" value="1"/>
</dbReference>
<dbReference type="FunFam" id="3.30.479.20:FF:000013">
    <property type="entry name" value="Elongation factor Ts"/>
    <property type="match status" value="1"/>
</dbReference>
<dbReference type="Gene3D" id="1.10.286.20">
    <property type="match status" value="1"/>
</dbReference>
<dbReference type="Gene3D" id="1.10.8.10">
    <property type="entry name" value="DNA helicase RuvA subunit, C-terminal domain"/>
    <property type="match status" value="1"/>
</dbReference>
<dbReference type="Gene3D" id="3.30.479.20">
    <property type="entry name" value="Elongation factor Ts, dimerisation domain"/>
    <property type="match status" value="2"/>
</dbReference>
<dbReference type="HAMAP" id="MF_00050">
    <property type="entry name" value="EF_Ts"/>
    <property type="match status" value="1"/>
</dbReference>
<dbReference type="InterPro" id="IPR036402">
    <property type="entry name" value="EF-Ts_dimer_sf"/>
</dbReference>
<dbReference type="InterPro" id="IPR001816">
    <property type="entry name" value="Transl_elong_EFTs/EF1B"/>
</dbReference>
<dbReference type="InterPro" id="IPR014039">
    <property type="entry name" value="Transl_elong_EFTs/EF1B_dimer"/>
</dbReference>
<dbReference type="InterPro" id="IPR018101">
    <property type="entry name" value="Transl_elong_Ts_CS"/>
</dbReference>
<dbReference type="InterPro" id="IPR009060">
    <property type="entry name" value="UBA-like_sf"/>
</dbReference>
<dbReference type="NCBIfam" id="TIGR00116">
    <property type="entry name" value="tsf"/>
    <property type="match status" value="1"/>
</dbReference>
<dbReference type="PANTHER" id="PTHR11741">
    <property type="entry name" value="ELONGATION FACTOR TS"/>
    <property type="match status" value="1"/>
</dbReference>
<dbReference type="PANTHER" id="PTHR11741:SF0">
    <property type="entry name" value="ELONGATION FACTOR TS, MITOCHONDRIAL"/>
    <property type="match status" value="1"/>
</dbReference>
<dbReference type="Pfam" id="PF00889">
    <property type="entry name" value="EF_TS"/>
    <property type="match status" value="1"/>
</dbReference>
<dbReference type="SUPFAM" id="SSF54713">
    <property type="entry name" value="Elongation factor Ts (EF-Ts), dimerisation domain"/>
    <property type="match status" value="2"/>
</dbReference>
<dbReference type="SUPFAM" id="SSF46934">
    <property type="entry name" value="UBA-like"/>
    <property type="match status" value="1"/>
</dbReference>
<dbReference type="PROSITE" id="PS01126">
    <property type="entry name" value="EF_TS_1"/>
    <property type="match status" value="1"/>
</dbReference>
<dbReference type="PROSITE" id="PS01127">
    <property type="entry name" value="EF_TS_2"/>
    <property type="match status" value="1"/>
</dbReference>
<evidence type="ECO:0000255" key="1">
    <source>
        <dbReference type="HAMAP-Rule" id="MF_00050"/>
    </source>
</evidence>